<feature type="chain" id="PRO_1000195927" description="Large ribosomal subunit protein bL28">
    <location>
        <begin position="1"/>
        <end position="76"/>
    </location>
</feature>
<feature type="region of interest" description="Disordered" evidence="2">
    <location>
        <begin position="21"/>
        <end position="42"/>
    </location>
</feature>
<feature type="compositionally biased region" description="Basic residues" evidence="2">
    <location>
        <begin position="33"/>
        <end position="42"/>
    </location>
</feature>
<reference key="1">
    <citation type="journal article" date="2009" name="PLoS ONE">
        <title>Genome analysis of the anaerobic thermohalophilic bacterium Halothermothrix orenii.</title>
        <authorList>
            <person name="Mavromatis K."/>
            <person name="Ivanova N."/>
            <person name="Anderson I."/>
            <person name="Lykidis A."/>
            <person name="Hooper S.D."/>
            <person name="Sun H."/>
            <person name="Kunin V."/>
            <person name="Lapidus A."/>
            <person name="Hugenholtz P."/>
            <person name="Patel B."/>
            <person name="Kyrpides N.C."/>
        </authorList>
    </citation>
    <scope>NUCLEOTIDE SEQUENCE [LARGE SCALE GENOMIC DNA]</scope>
    <source>
        <strain>H 168 / OCM 544 / DSM 9562</strain>
    </source>
</reference>
<evidence type="ECO:0000255" key="1">
    <source>
        <dbReference type="HAMAP-Rule" id="MF_00373"/>
    </source>
</evidence>
<evidence type="ECO:0000256" key="2">
    <source>
        <dbReference type="SAM" id="MobiDB-lite"/>
    </source>
</evidence>
<evidence type="ECO:0000305" key="3"/>
<protein>
    <recommendedName>
        <fullName evidence="1">Large ribosomal subunit protein bL28</fullName>
    </recommendedName>
    <alternativeName>
        <fullName evidence="3">50S ribosomal protein L28</fullName>
    </alternativeName>
</protein>
<accession>B8CWU5</accession>
<comment type="similarity">
    <text evidence="1">Belongs to the bacterial ribosomal protein bL28 family.</text>
</comment>
<gene>
    <name evidence="1" type="primary">rpmB</name>
    <name type="ordered locus">Hore_10080</name>
</gene>
<organism>
    <name type="scientific">Halothermothrix orenii (strain H 168 / OCM 544 / DSM 9562)</name>
    <dbReference type="NCBI Taxonomy" id="373903"/>
    <lineage>
        <taxon>Bacteria</taxon>
        <taxon>Bacillati</taxon>
        <taxon>Bacillota</taxon>
        <taxon>Clostridia</taxon>
        <taxon>Halanaerobiales</taxon>
        <taxon>Halothermotrichaceae</taxon>
        <taxon>Halothermothrix</taxon>
    </lineage>
</organism>
<keyword id="KW-1185">Reference proteome</keyword>
<keyword id="KW-0687">Ribonucleoprotein</keyword>
<keyword id="KW-0689">Ribosomal protein</keyword>
<proteinExistence type="inferred from homology"/>
<name>RL28_HALOH</name>
<dbReference type="EMBL" id="CP001098">
    <property type="protein sequence ID" value="ACL69764.1"/>
    <property type="molecule type" value="Genomic_DNA"/>
</dbReference>
<dbReference type="RefSeq" id="WP_012635949.1">
    <property type="nucleotide sequence ID" value="NC_011899.1"/>
</dbReference>
<dbReference type="SMR" id="B8CWU5"/>
<dbReference type="STRING" id="373903.Hore_10080"/>
<dbReference type="KEGG" id="hor:Hore_10080"/>
<dbReference type="eggNOG" id="COG0227">
    <property type="taxonomic scope" value="Bacteria"/>
</dbReference>
<dbReference type="HOGENOM" id="CLU_064548_7_0_9"/>
<dbReference type="OrthoDB" id="9805609at2"/>
<dbReference type="Proteomes" id="UP000000719">
    <property type="component" value="Chromosome"/>
</dbReference>
<dbReference type="GO" id="GO:1990904">
    <property type="term" value="C:ribonucleoprotein complex"/>
    <property type="evidence" value="ECO:0007669"/>
    <property type="project" value="UniProtKB-KW"/>
</dbReference>
<dbReference type="GO" id="GO:0005840">
    <property type="term" value="C:ribosome"/>
    <property type="evidence" value="ECO:0007669"/>
    <property type="project" value="UniProtKB-KW"/>
</dbReference>
<dbReference type="GO" id="GO:0003735">
    <property type="term" value="F:structural constituent of ribosome"/>
    <property type="evidence" value="ECO:0007669"/>
    <property type="project" value="InterPro"/>
</dbReference>
<dbReference type="GO" id="GO:0006412">
    <property type="term" value="P:translation"/>
    <property type="evidence" value="ECO:0007669"/>
    <property type="project" value="UniProtKB-UniRule"/>
</dbReference>
<dbReference type="Gene3D" id="2.30.170.40">
    <property type="entry name" value="Ribosomal protein L28/L24"/>
    <property type="match status" value="1"/>
</dbReference>
<dbReference type="HAMAP" id="MF_00373">
    <property type="entry name" value="Ribosomal_bL28"/>
    <property type="match status" value="1"/>
</dbReference>
<dbReference type="InterPro" id="IPR050096">
    <property type="entry name" value="Bacterial_rp_bL28"/>
</dbReference>
<dbReference type="InterPro" id="IPR026569">
    <property type="entry name" value="Ribosomal_bL28"/>
</dbReference>
<dbReference type="InterPro" id="IPR034704">
    <property type="entry name" value="Ribosomal_bL28/bL31-like_sf"/>
</dbReference>
<dbReference type="InterPro" id="IPR001383">
    <property type="entry name" value="Ribosomal_bL28_bact-type"/>
</dbReference>
<dbReference type="InterPro" id="IPR037147">
    <property type="entry name" value="Ribosomal_bL28_sf"/>
</dbReference>
<dbReference type="NCBIfam" id="TIGR00009">
    <property type="entry name" value="L28"/>
    <property type="match status" value="1"/>
</dbReference>
<dbReference type="PANTHER" id="PTHR39080">
    <property type="entry name" value="50S RIBOSOMAL PROTEIN L28"/>
    <property type="match status" value="1"/>
</dbReference>
<dbReference type="PANTHER" id="PTHR39080:SF1">
    <property type="entry name" value="LARGE RIBOSOMAL SUBUNIT PROTEIN BL28A"/>
    <property type="match status" value="1"/>
</dbReference>
<dbReference type="Pfam" id="PF00830">
    <property type="entry name" value="Ribosomal_L28"/>
    <property type="match status" value="1"/>
</dbReference>
<dbReference type="SUPFAM" id="SSF143800">
    <property type="entry name" value="L28p-like"/>
    <property type="match status" value="1"/>
</dbReference>
<sequence length="76" mass="8520">MSRVCEICGKGTVKANRITRRGKAKKEGGVGKHITKTSRRRQKPNLVKVKAIVDGRPKRIKVCTKCLKSGRVERAY</sequence>